<comment type="function">
    <text evidence="1">May catalyze the final step in cell wall teichoic acid biosynthesis, the transfer of the anionic cell wall polymers (APs) from their lipid-linked precursor to the cell wall peptidoglycan (PG).</text>
</comment>
<comment type="pathway">
    <text evidence="1">Cell wall biogenesis.</text>
</comment>
<comment type="subcellular location">
    <subcellularLocation>
        <location evidence="1">Cell membrane</location>
        <topology evidence="1">Single-pass type II membrane protein</topology>
    </subcellularLocation>
</comment>
<comment type="similarity">
    <text evidence="1">Belongs to the LytR/CpsA/Psr (LCP) family.</text>
</comment>
<dbReference type="EC" id="2.7.8.-" evidence="1"/>
<dbReference type="EMBL" id="CP001283">
    <property type="protein sequence ID" value="ACK89455.1"/>
    <property type="molecule type" value="Genomic_DNA"/>
</dbReference>
<dbReference type="RefSeq" id="WP_000727086.1">
    <property type="nucleotide sequence ID" value="NC_011773.1"/>
</dbReference>
<dbReference type="SMR" id="B7JGI9"/>
<dbReference type="KEGG" id="bcu:BCAH820_5355"/>
<dbReference type="HOGENOM" id="CLU_016455_2_2_9"/>
<dbReference type="Proteomes" id="UP000001363">
    <property type="component" value="Chromosome"/>
</dbReference>
<dbReference type="GO" id="GO:0005886">
    <property type="term" value="C:plasma membrane"/>
    <property type="evidence" value="ECO:0007669"/>
    <property type="project" value="UniProtKB-SubCell"/>
</dbReference>
<dbReference type="GO" id="GO:0016780">
    <property type="term" value="F:phosphotransferase activity, for other substituted phosphate groups"/>
    <property type="evidence" value="ECO:0007669"/>
    <property type="project" value="UniProtKB-UniRule"/>
</dbReference>
<dbReference type="GO" id="GO:0070726">
    <property type="term" value="P:cell wall assembly"/>
    <property type="evidence" value="ECO:0007669"/>
    <property type="project" value="UniProtKB-UniRule"/>
</dbReference>
<dbReference type="Gene3D" id="3.40.630.190">
    <property type="entry name" value="LCP protein"/>
    <property type="match status" value="1"/>
</dbReference>
<dbReference type="HAMAP" id="MF_01140">
    <property type="entry name" value="TagU_transferase"/>
    <property type="match status" value="1"/>
</dbReference>
<dbReference type="InterPro" id="IPR050922">
    <property type="entry name" value="LytR/CpsA/Psr_CW_biosynth"/>
</dbReference>
<dbReference type="InterPro" id="IPR004474">
    <property type="entry name" value="LytR_CpsA_psr"/>
</dbReference>
<dbReference type="InterPro" id="IPR023734">
    <property type="entry name" value="TagU"/>
</dbReference>
<dbReference type="NCBIfam" id="TIGR00350">
    <property type="entry name" value="lytR_cpsA_psr"/>
    <property type="match status" value="1"/>
</dbReference>
<dbReference type="NCBIfam" id="NF006897">
    <property type="entry name" value="PRK09379.1"/>
    <property type="match status" value="1"/>
</dbReference>
<dbReference type="PANTHER" id="PTHR33392">
    <property type="entry name" value="POLYISOPRENYL-TEICHOIC ACID--PEPTIDOGLYCAN TEICHOIC ACID TRANSFERASE TAGU"/>
    <property type="match status" value="1"/>
</dbReference>
<dbReference type="PANTHER" id="PTHR33392:SF6">
    <property type="entry name" value="POLYISOPRENYL-TEICHOIC ACID--PEPTIDOGLYCAN TEICHOIC ACID TRANSFERASE TAGU"/>
    <property type="match status" value="1"/>
</dbReference>
<dbReference type="Pfam" id="PF03816">
    <property type="entry name" value="LytR_cpsA_psr"/>
    <property type="match status" value="1"/>
</dbReference>
<gene>
    <name evidence="1" type="primary">tagU</name>
    <name type="ordered locus">BCAH820_5355</name>
</gene>
<reference key="1">
    <citation type="submission" date="2008-10" db="EMBL/GenBank/DDBJ databases">
        <title>Genome sequence of Bacillus cereus AH820.</title>
        <authorList>
            <person name="Dodson R.J."/>
            <person name="Durkin A.S."/>
            <person name="Rosovitz M.J."/>
            <person name="Rasko D.A."/>
            <person name="Hoffmaster A."/>
            <person name="Ravel J."/>
            <person name="Sutton G."/>
        </authorList>
    </citation>
    <scope>NUCLEOTIDE SEQUENCE [LARGE SCALE GENOMIC DNA]</scope>
    <source>
        <strain>AH820</strain>
    </source>
</reference>
<accession>B7JGI9</accession>
<keyword id="KW-1003">Cell membrane</keyword>
<keyword id="KW-0961">Cell wall biogenesis/degradation</keyword>
<keyword id="KW-0472">Membrane</keyword>
<keyword id="KW-0735">Signal-anchor</keyword>
<keyword id="KW-0808">Transferase</keyword>
<keyword id="KW-0812">Transmembrane</keyword>
<keyword id="KW-1133">Transmembrane helix</keyword>
<evidence type="ECO:0000255" key="1">
    <source>
        <dbReference type="HAMAP-Rule" id="MF_01140"/>
    </source>
</evidence>
<proteinExistence type="inferred from homology"/>
<feature type="chain" id="PRO_1000137341" description="Polyisoprenyl-teichoic acid--peptidoglycan teichoic acid transferase TagU">
    <location>
        <begin position="1"/>
        <end position="303"/>
    </location>
</feature>
<feature type="topological domain" description="Cytoplasmic" evidence="1">
    <location>
        <begin position="1"/>
        <end position="4"/>
    </location>
</feature>
<feature type="transmembrane region" description="Helical; Signal-anchor for type II membrane protein" evidence="1">
    <location>
        <begin position="5"/>
        <end position="25"/>
    </location>
</feature>
<feature type="topological domain" description="Extracellular" evidence="1">
    <location>
        <begin position="26"/>
        <end position="303"/>
    </location>
</feature>
<protein>
    <recommendedName>
        <fullName evidence="1">Polyisoprenyl-teichoic acid--peptidoglycan teichoic acid transferase TagU</fullName>
        <ecNumber evidence="1">2.7.8.-</ecNumber>
    </recommendedName>
</protein>
<name>TAGU_BACC0</name>
<sequence length="303" mass="33703">MKKKILFWVLGILGVLIIGGGIYAYNVYSSVSNTLKEVHQPLKRDQNNSNVGEKVSKSEPVSILLLGADERGDDKGRSDSLMVITLNPKNNSMKTVSIPRDTYTEIVGKGKSDKINHAYAFGGVDMSVATVEKFLDVPINYYIEVNMEGFKDIVDAVGGVDVTNDLEFTQDGHHFAKGNIHLTGDQALAFTRMRKQDPRGDFGRQMRQRQVMQGVIKKGASFSSLTGYGDVLAAIQKNVKTNLTQDQMFDMQKNYKDCLKNSEDIQIPGDGHKAADGIWYYYVPDAAKQDLTNKLRSHLEVTK</sequence>
<organism>
    <name type="scientific">Bacillus cereus (strain AH820)</name>
    <dbReference type="NCBI Taxonomy" id="405535"/>
    <lineage>
        <taxon>Bacteria</taxon>
        <taxon>Bacillati</taxon>
        <taxon>Bacillota</taxon>
        <taxon>Bacilli</taxon>
        <taxon>Bacillales</taxon>
        <taxon>Bacillaceae</taxon>
        <taxon>Bacillus</taxon>
        <taxon>Bacillus cereus group</taxon>
    </lineage>
</organism>